<proteinExistence type="inferred from homology"/>
<sequence length="624" mass="65044">MSSGVQGGSAANANAYQTHPLRDAASALGTLSPQAYVDVVSAAQRNFLERMSRLASEQCDAQPVTDDARLDRLDDKPALRAPRSDAAHAADGNARGNGGASGAAKLTELLGVLMSVISASSLDELRQRSDIWNQMSKAAQDNLTSLSDKFQCATDDAKAATDAAERAAAAAKQAAADAKAADAAADAAQKRYDDAMKQGLPDDQLKTLQAALEQAKQQAGDAHARADALQADAAGKLDAATALATQAREWEQQIDDAVNQASRQYGASASLRTPPSPKLSGAAELTAVLGKLQELISSGNVKELESKQKLFTEMQAKREAELQKKSDEYQEQVKKAEEMQKTMGCIGKIVGWVITAVSFAAAAFTGGASLALAAVGLALAVGDEISRATTGVSFMDKLMQPVMDAILKPLMEVISSLITKALVACGVDQQKAELAGAILGAVVTGVALVAAAFVGASAVKAVASKVIDAVAGQLTKLMDSAIGKMLVQLIEKFSEKSGLQALGSRTATAMTRMRRAIGVEAKEDGMLLANRFEKAGTVMNVGNQVSQAAGGIVVGVERAKAMGLLADVKEAMYDIKLLGDLLKQAVESFAEHNRALAQLMQQMSDAGEMQTATGKLILRNARAV</sequence>
<organism>
    <name type="scientific">Burkholderia thailandensis (strain ATCC 700388 / DSM 13276 / CCUG 48851 / CIP 106301 / E264)</name>
    <dbReference type="NCBI Taxonomy" id="271848"/>
    <lineage>
        <taxon>Bacteria</taxon>
        <taxon>Pseudomonadati</taxon>
        <taxon>Pseudomonadota</taxon>
        <taxon>Betaproteobacteria</taxon>
        <taxon>Burkholderiales</taxon>
        <taxon>Burkholderiaceae</taxon>
        <taxon>Burkholderia</taxon>
        <taxon>pseudomallei group</taxon>
    </lineage>
</organism>
<feature type="chain" id="PRO_0000343994" description="Translocator protein BipB">
    <location>
        <begin position="1"/>
        <end position="624"/>
    </location>
</feature>
<feature type="transmembrane region" description="Helical" evidence="2">
    <location>
        <begin position="359"/>
        <end position="379"/>
    </location>
</feature>
<feature type="transmembrane region" description="Helical" evidence="2">
    <location>
        <begin position="405"/>
        <end position="425"/>
    </location>
</feature>
<feature type="transmembrane region" description="Helical" evidence="2">
    <location>
        <begin position="434"/>
        <end position="454"/>
    </location>
</feature>
<feature type="region of interest" description="Disordered" evidence="3">
    <location>
        <begin position="54"/>
        <end position="99"/>
    </location>
</feature>
<feature type="coiled-coil region" evidence="2">
    <location>
        <begin position="313"/>
        <end position="343"/>
    </location>
</feature>
<feature type="compositionally biased region" description="Basic and acidic residues" evidence="3">
    <location>
        <begin position="66"/>
        <end position="88"/>
    </location>
</feature>
<keyword id="KW-0175">Coiled coil</keyword>
<keyword id="KW-1043">Host membrane</keyword>
<keyword id="KW-0472">Membrane</keyword>
<keyword id="KW-0964">Secreted</keyword>
<keyword id="KW-0812">Transmembrane</keyword>
<keyword id="KW-1133">Transmembrane helix</keyword>
<keyword id="KW-0843">Virulence</keyword>
<accession>Q2T711</accession>
<evidence type="ECO:0000250" key="1"/>
<evidence type="ECO:0000255" key="2"/>
<evidence type="ECO:0000256" key="3">
    <source>
        <dbReference type="SAM" id="MobiDB-lite"/>
    </source>
</evidence>
<evidence type="ECO:0000305" key="4"/>
<reference key="1">
    <citation type="journal article" date="2005" name="BMC Genomics">
        <title>Bacterial genome adaptation to niches: divergence of the potential virulence genes in three Burkholderia species of different survival strategies.</title>
        <authorList>
            <person name="Kim H.S."/>
            <person name="Schell M.A."/>
            <person name="Yu Y."/>
            <person name="Ulrich R.L."/>
            <person name="Sarria S.H."/>
            <person name="Nierman W.C."/>
            <person name="DeShazer D."/>
        </authorList>
    </citation>
    <scope>NUCLEOTIDE SEQUENCE [LARGE SCALE GENOMIC DNA]</scope>
    <source>
        <strain>ATCC 700388 / DSM 13276 / CCUG 48851 / CIP 106301 / E264</strain>
    </source>
</reference>
<dbReference type="EMBL" id="CP000085">
    <property type="protein sequence ID" value="ABC34967.1"/>
    <property type="molecule type" value="Genomic_DNA"/>
</dbReference>
<dbReference type="RefSeq" id="WP_011401047.1">
    <property type="nucleotide sequence ID" value="NZ_CP008786.1"/>
</dbReference>
<dbReference type="SMR" id="Q2T711"/>
<dbReference type="GeneID" id="45118318"/>
<dbReference type="KEGG" id="bte:BTH_II0841"/>
<dbReference type="HOGENOM" id="CLU_027418_0_0_4"/>
<dbReference type="Proteomes" id="UP000001930">
    <property type="component" value="Chromosome II"/>
</dbReference>
<dbReference type="GO" id="GO:0005576">
    <property type="term" value="C:extracellular region"/>
    <property type="evidence" value="ECO:0007669"/>
    <property type="project" value="UniProtKB-SubCell"/>
</dbReference>
<dbReference type="GO" id="GO:0033644">
    <property type="term" value="C:host cell membrane"/>
    <property type="evidence" value="ECO:0007669"/>
    <property type="project" value="UniProtKB-SubCell"/>
</dbReference>
<dbReference type="GO" id="GO:0016020">
    <property type="term" value="C:membrane"/>
    <property type="evidence" value="ECO:0007669"/>
    <property type="project" value="UniProtKB-KW"/>
</dbReference>
<dbReference type="Gene3D" id="1.20.120.330">
    <property type="entry name" value="Nucleotidyltransferases domain 2"/>
    <property type="match status" value="2"/>
</dbReference>
<dbReference type="InterPro" id="IPR006972">
    <property type="entry name" value="BipB-like_C"/>
</dbReference>
<dbReference type="InterPro" id="IPR032391">
    <property type="entry name" value="IpaB/BipB/SctE_N"/>
</dbReference>
<dbReference type="InterPro" id="IPR003895">
    <property type="entry name" value="T3SS_SctE/BipB"/>
</dbReference>
<dbReference type="Pfam" id="PF04888">
    <property type="entry name" value="SseC"/>
    <property type="match status" value="1"/>
</dbReference>
<dbReference type="Pfam" id="PF16535">
    <property type="entry name" value="T3SSipB"/>
    <property type="match status" value="1"/>
</dbReference>
<dbReference type="PRINTS" id="PR01375">
    <property type="entry name" value="BACINVASINB"/>
</dbReference>
<gene>
    <name type="primary">bipB</name>
    <name type="ordered locus">BTH_II0841</name>
</gene>
<comment type="function">
    <text evidence="1">Plays a role in the bacterium-induced formation of multinucleated giant cell (MNGC), which is formed after host cell fusion, as well as in the intercellular spreading of bacteria and in the induction of apoptosis in macrophages. May act in concert with other effector proteins to induce fusion of host cell membranes (By similarity).</text>
</comment>
<comment type="subcellular location">
    <subcellularLocation>
        <location evidence="1">Secreted</location>
    </subcellularLocation>
    <subcellularLocation>
        <location evidence="1">Host membrane</location>
    </subcellularLocation>
    <text evidence="1">Secreted via the bsa type III secretion system, and probably inserted into host membranes.</text>
</comment>
<comment type="similarity">
    <text evidence="4">Belongs to the SctE/SipB/YopB family.</text>
</comment>
<protein>
    <recommendedName>
        <fullName>Translocator protein BipB</fullName>
    </recommendedName>
</protein>
<name>BIPB_BURTA</name>